<protein>
    <recommendedName>
        <fullName>Phytanoyl-CoA hydroxylase-interacting protein-like</fullName>
    </recommendedName>
</protein>
<sequence>MEVPRLSQHMSTPNSPCEEMIKNLSLENIQLCERDGNKSQDSGIAEMEELPVPHNIKISNITCDSFKISWDMDPKSKDRITHYFVDLNKKENKNSNKFKHKDVPTKLVAKAVPLPMTVRGHWFLSPRTEYTVAVQTASKQVDGDYAVSEWSEIIEFCTADYSKVHLTQLMEKAEAIAGRMLKFSVFYRNQHKEYFDYIREHHGNVMQPSPKDNSGSHGSPISAKLEGIFFSCNTEFNTGKPQQDSPYGRYRVEIPAEKLFNPNTNLYFGDFYCMYTAYHYVILVIAPMGSPGDEFCKQRLPQLSLSDNKFLTCTQEHDGLVFHQAQDVILEVIYTDPVDLSWGNVAEIIGHQLMSLSTADAKKDPSCKTCNISVGR</sequence>
<gene>
    <name type="primary">phyhipl</name>
</gene>
<keyword id="KW-1185">Reference proteome</keyword>
<feature type="chain" id="PRO_0000338646" description="Phytanoyl-CoA hydroxylase-interacting protein-like">
    <location>
        <begin position="1"/>
        <end position="376"/>
    </location>
</feature>
<feature type="domain" description="Fibronectin type-III" evidence="2">
    <location>
        <begin position="52"/>
        <end position="161"/>
    </location>
</feature>
<accession>Q6AX58</accession>
<dbReference type="EMBL" id="BC079744">
    <property type="protein sequence ID" value="AAH79744.1"/>
    <property type="molecule type" value="mRNA"/>
</dbReference>
<dbReference type="RefSeq" id="NP_001087414.1">
    <property type="nucleotide sequence ID" value="NM_001093945.1"/>
</dbReference>
<dbReference type="SMR" id="Q6AX58"/>
<dbReference type="DNASU" id="447238"/>
<dbReference type="GeneID" id="447238"/>
<dbReference type="KEGG" id="xla:447238"/>
<dbReference type="AGR" id="Xenbase:XB-GENE-6078101"/>
<dbReference type="CTD" id="447238"/>
<dbReference type="Xenbase" id="XB-GENE-6078101">
    <property type="gene designation" value="phyhipl.S"/>
</dbReference>
<dbReference type="OrthoDB" id="6101761at2759"/>
<dbReference type="Proteomes" id="UP000186698">
    <property type="component" value="Chromosome 7S"/>
</dbReference>
<dbReference type="Bgee" id="447238">
    <property type="expression patterns" value="Expressed in brain and 16 other cell types or tissues"/>
</dbReference>
<dbReference type="GO" id="GO:0005737">
    <property type="term" value="C:cytoplasm"/>
    <property type="evidence" value="ECO:0000318"/>
    <property type="project" value="GO_Central"/>
</dbReference>
<dbReference type="CDD" id="cd00063">
    <property type="entry name" value="FN3"/>
    <property type="match status" value="1"/>
</dbReference>
<dbReference type="FunFam" id="2.60.40.10:FF:000277">
    <property type="entry name" value="Phytanoyl-CoA hydroxylase-interacting protein-like protein"/>
    <property type="match status" value="1"/>
</dbReference>
<dbReference type="Gene3D" id="2.60.40.10">
    <property type="entry name" value="Immunoglobulins"/>
    <property type="match status" value="1"/>
</dbReference>
<dbReference type="InterPro" id="IPR003961">
    <property type="entry name" value="FN3_dom"/>
</dbReference>
<dbReference type="InterPro" id="IPR036116">
    <property type="entry name" value="FN3_sf"/>
</dbReference>
<dbReference type="InterPro" id="IPR013783">
    <property type="entry name" value="Ig-like_fold"/>
</dbReference>
<dbReference type="InterPro" id="IPR042868">
    <property type="entry name" value="PHYHIP/PHYHIPL"/>
</dbReference>
<dbReference type="InterPro" id="IPR045545">
    <property type="entry name" value="PHYIP/PHIPL_C"/>
</dbReference>
<dbReference type="PANTHER" id="PTHR15698:SF8">
    <property type="entry name" value="PHYTANOYL-COA HYDROXYLASE-INTERACTING PROTEIN-LIKE"/>
    <property type="match status" value="1"/>
</dbReference>
<dbReference type="PANTHER" id="PTHR15698">
    <property type="entry name" value="PROTEIN CBG15099"/>
    <property type="match status" value="1"/>
</dbReference>
<dbReference type="Pfam" id="PF00041">
    <property type="entry name" value="fn3"/>
    <property type="match status" value="1"/>
</dbReference>
<dbReference type="Pfam" id="PF19281">
    <property type="entry name" value="PHYHIP_C"/>
    <property type="match status" value="1"/>
</dbReference>
<dbReference type="SMART" id="SM00060">
    <property type="entry name" value="FN3"/>
    <property type="match status" value="1"/>
</dbReference>
<dbReference type="SUPFAM" id="SSF49265">
    <property type="entry name" value="Fibronectin type III"/>
    <property type="match status" value="1"/>
</dbReference>
<dbReference type="PROSITE" id="PS50853">
    <property type="entry name" value="FN3"/>
    <property type="match status" value="1"/>
</dbReference>
<organism>
    <name type="scientific">Xenopus laevis</name>
    <name type="common">African clawed frog</name>
    <dbReference type="NCBI Taxonomy" id="8355"/>
    <lineage>
        <taxon>Eukaryota</taxon>
        <taxon>Metazoa</taxon>
        <taxon>Chordata</taxon>
        <taxon>Craniata</taxon>
        <taxon>Vertebrata</taxon>
        <taxon>Euteleostomi</taxon>
        <taxon>Amphibia</taxon>
        <taxon>Batrachia</taxon>
        <taxon>Anura</taxon>
        <taxon>Pipoidea</taxon>
        <taxon>Pipidae</taxon>
        <taxon>Xenopodinae</taxon>
        <taxon>Xenopus</taxon>
        <taxon>Xenopus</taxon>
    </lineage>
</organism>
<evidence type="ECO:0000250" key="1"/>
<evidence type="ECO:0000255" key="2">
    <source>
        <dbReference type="PROSITE-ProRule" id="PRU00316"/>
    </source>
</evidence>
<evidence type="ECO:0000305" key="3"/>
<comment type="function">
    <text evidence="1">May play a role in the development of the central system.</text>
</comment>
<comment type="similarity">
    <text evidence="3">Belongs to the PHYHIP family.</text>
</comment>
<name>PHIPL_XENLA</name>
<proteinExistence type="evidence at transcript level"/>
<reference key="1">
    <citation type="submission" date="2004-08" db="EMBL/GenBank/DDBJ databases">
        <authorList>
            <consortium name="NIH - Xenopus Gene Collection (XGC) project"/>
        </authorList>
    </citation>
    <scope>NUCLEOTIDE SEQUENCE [LARGE SCALE MRNA]</scope>
    <source>
        <tissue>Eye</tissue>
    </source>
</reference>